<sequence length="145" mass="15904">METIFDYNQIKQIIPHRQPFLLIDKIVEYEEGKRCVGLKQVSGNEPFFQGHFPNYAVMPGVLITEALAQTGAVAMLNSEENKGKIALFAGIDKCRFKKQVVPGDTLMLEVEITKIKGPIGKGSAKATVDGQLACSCELTFAIQDA</sequence>
<evidence type="ECO:0000255" key="1">
    <source>
        <dbReference type="HAMAP-Rule" id="MF_00406"/>
    </source>
</evidence>
<protein>
    <recommendedName>
        <fullName evidence="1">3-hydroxyacyl-[acyl-carrier-protein] dehydratase FabZ</fullName>
        <ecNumber evidence="1">4.2.1.59</ecNumber>
    </recommendedName>
    <alternativeName>
        <fullName evidence="1">(3R)-hydroxymyristoyl-[acyl-carrier-protein] dehydratase</fullName>
        <shortName evidence="1">(3R)-hydroxymyristoyl-ACP dehydrase</shortName>
    </alternativeName>
    <alternativeName>
        <fullName evidence="1">Beta-hydroxyacyl-ACP dehydratase</fullName>
    </alternativeName>
</protein>
<reference key="1">
    <citation type="journal article" date="2003" name="Mol. Microbiol.">
        <title>Genome-based analysis of virulence genes in a non-biofilm-forming Staphylococcus epidermidis strain (ATCC 12228).</title>
        <authorList>
            <person name="Zhang Y.-Q."/>
            <person name="Ren S.-X."/>
            <person name="Li H.-L."/>
            <person name="Wang Y.-X."/>
            <person name="Fu G."/>
            <person name="Yang J."/>
            <person name="Qin Z.-Q."/>
            <person name="Miao Y.-G."/>
            <person name="Wang W.-Y."/>
            <person name="Chen R.-S."/>
            <person name="Shen Y."/>
            <person name="Chen Z."/>
            <person name="Yuan Z.-H."/>
            <person name="Zhao G.-P."/>
            <person name="Qu D."/>
            <person name="Danchin A."/>
            <person name="Wen Y.-M."/>
        </authorList>
    </citation>
    <scope>NUCLEOTIDE SEQUENCE [LARGE SCALE GENOMIC DNA]</scope>
    <source>
        <strain>ATCC 12228 / FDA PCI 1200</strain>
    </source>
</reference>
<organism>
    <name type="scientific">Staphylococcus epidermidis (strain ATCC 12228 / FDA PCI 1200)</name>
    <dbReference type="NCBI Taxonomy" id="176280"/>
    <lineage>
        <taxon>Bacteria</taxon>
        <taxon>Bacillati</taxon>
        <taxon>Bacillota</taxon>
        <taxon>Bacilli</taxon>
        <taxon>Bacillales</taxon>
        <taxon>Staphylococcaceae</taxon>
        <taxon>Staphylococcus</taxon>
    </lineage>
</organism>
<accession>Q8CNJ9</accession>
<proteinExistence type="inferred from homology"/>
<keyword id="KW-0963">Cytoplasm</keyword>
<keyword id="KW-0441">Lipid A biosynthesis</keyword>
<keyword id="KW-0444">Lipid biosynthesis</keyword>
<keyword id="KW-0443">Lipid metabolism</keyword>
<keyword id="KW-0456">Lyase</keyword>
<feature type="chain" id="PRO_0000091736" description="3-hydroxyacyl-[acyl-carrier-protein] dehydratase FabZ">
    <location>
        <begin position="1"/>
        <end position="145"/>
    </location>
</feature>
<feature type="active site" evidence="1">
    <location>
        <position position="51"/>
    </location>
</feature>
<name>FABZ_STAES</name>
<gene>
    <name evidence="1" type="primary">fabZ</name>
    <name type="ordered locus">SE_1697</name>
</gene>
<comment type="function">
    <text evidence="1">Involved in unsaturated fatty acids biosynthesis. Catalyzes the dehydration of short chain beta-hydroxyacyl-ACPs and long chain saturated and unsaturated beta-hydroxyacyl-ACPs.</text>
</comment>
<comment type="catalytic activity">
    <reaction evidence="1">
        <text>a (3R)-hydroxyacyl-[ACP] = a (2E)-enoyl-[ACP] + H2O</text>
        <dbReference type="Rhea" id="RHEA:13097"/>
        <dbReference type="Rhea" id="RHEA-COMP:9925"/>
        <dbReference type="Rhea" id="RHEA-COMP:9945"/>
        <dbReference type="ChEBI" id="CHEBI:15377"/>
        <dbReference type="ChEBI" id="CHEBI:78784"/>
        <dbReference type="ChEBI" id="CHEBI:78827"/>
        <dbReference type="EC" id="4.2.1.59"/>
    </reaction>
</comment>
<comment type="subcellular location">
    <subcellularLocation>
        <location evidence="1">Cytoplasm</location>
    </subcellularLocation>
</comment>
<comment type="similarity">
    <text evidence="1">Belongs to the thioester dehydratase family. FabZ subfamily.</text>
</comment>
<dbReference type="EC" id="4.2.1.59" evidence="1"/>
<dbReference type="EMBL" id="AE015929">
    <property type="protein sequence ID" value="AAO05296.1"/>
    <property type="molecule type" value="Genomic_DNA"/>
</dbReference>
<dbReference type="RefSeq" id="NP_765252.1">
    <property type="nucleotide sequence ID" value="NC_004461.1"/>
</dbReference>
<dbReference type="RefSeq" id="WP_001829953.1">
    <property type="nucleotide sequence ID" value="NZ_WBME01000021.1"/>
</dbReference>
<dbReference type="SMR" id="Q8CNJ9"/>
<dbReference type="GeneID" id="50018203"/>
<dbReference type="KEGG" id="sep:SE_1697"/>
<dbReference type="PATRIC" id="fig|176280.10.peg.1657"/>
<dbReference type="eggNOG" id="COG0764">
    <property type="taxonomic scope" value="Bacteria"/>
</dbReference>
<dbReference type="HOGENOM" id="CLU_078912_3_0_9"/>
<dbReference type="OrthoDB" id="9772788at2"/>
<dbReference type="Proteomes" id="UP000001411">
    <property type="component" value="Chromosome"/>
</dbReference>
<dbReference type="GO" id="GO:0005737">
    <property type="term" value="C:cytoplasm"/>
    <property type="evidence" value="ECO:0007669"/>
    <property type="project" value="UniProtKB-SubCell"/>
</dbReference>
<dbReference type="GO" id="GO:0016020">
    <property type="term" value="C:membrane"/>
    <property type="evidence" value="ECO:0007669"/>
    <property type="project" value="GOC"/>
</dbReference>
<dbReference type="GO" id="GO:0019171">
    <property type="term" value="F:(3R)-hydroxyacyl-[acyl-carrier-protein] dehydratase activity"/>
    <property type="evidence" value="ECO:0007669"/>
    <property type="project" value="UniProtKB-EC"/>
</dbReference>
<dbReference type="GO" id="GO:0006633">
    <property type="term" value="P:fatty acid biosynthetic process"/>
    <property type="evidence" value="ECO:0007669"/>
    <property type="project" value="UniProtKB-UniRule"/>
</dbReference>
<dbReference type="GO" id="GO:0009245">
    <property type="term" value="P:lipid A biosynthetic process"/>
    <property type="evidence" value="ECO:0007669"/>
    <property type="project" value="UniProtKB-UniRule"/>
</dbReference>
<dbReference type="CDD" id="cd01288">
    <property type="entry name" value="FabZ"/>
    <property type="match status" value="1"/>
</dbReference>
<dbReference type="FunFam" id="3.10.129.10:FF:000001">
    <property type="entry name" value="3-hydroxyacyl-[acyl-carrier-protein] dehydratase FabZ"/>
    <property type="match status" value="1"/>
</dbReference>
<dbReference type="Gene3D" id="3.10.129.10">
    <property type="entry name" value="Hotdog Thioesterase"/>
    <property type="match status" value="1"/>
</dbReference>
<dbReference type="HAMAP" id="MF_00406">
    <property type="entry name" value="FabZ"/>
    <property type="match status" value="1"/>
</dbReference>
<dbReference type="InterPro" id="IPR013114">
    <property type="entry name" value="FabA_FabZ"/>
</dbReference>
<dbReference type="InterPro" id="IPR010084">
    <property type="entry name" value="FabZ"/>
</dbReference>
<dbReference type="InterPro" id="IPR029069">
    <property type="entry name" value="HotDog_dom_sf"/>
</dbReference>
<dbReference type="NCBIfam" id="TIGR01750">
    <property type="entry name" value="fabZ"/>
    <property type="match status" value="1"/>
</dbReference>
<dbReference type="NCBIfam" id="NF000582">
    <property type="entry name" value="PRK00006.1"/>
    <property type="match status" value="1"/>
</dbReference>
<dbReference type="PANTHER" id="PTHR30272">
    <property type="entry name" value="3-HYDROXYACYL-[ACYL-CARRIER-PROTEIN] DEHYDRATASE"/>
    <property type="match status" value="1"/>
</dbReference>
<dbReference type="PANTHER" id="PTHR30272:SF1">
    <property type="entry name" value="3-HYDROXYACYL-[ACYL-CARRIER-PROTEIN] DEHYDRATASE"/>
    <property type="match status" value="1"/>
</dbReference>
<dbReference type="Pfam" id="PF07977">
    <property type="entry name" value="FabA"/>
    <property type="match status" value="1"/>
</dbReference>
<dbReference type="SUPFAM" id="SSF54637">
    <property type="entry name" value="Thioesterase/thiol ester dehydrase-isomerase"/>
    <property type="match status" value="1"/>
</dbReference>